<dbReference type="EC" id="4.2.3.4" evidence="1"/>
<dbReference type="EMBL" id="AE017126">
    <property type="protein sequence ID" value="AAQ00054.1"/>
    <property type="molecule type" value="Genomic_DNA"/>
</dbReference>
<dbReference type="RefSeq" id="NP_875401.1">
    <property type="nucleotide sequence ID" value="NC_005042.1"/>
</dbReference>
<dbReference type="RefSeq" id="WP_011125161.1">
    <property type="nucleotide sequence ID" value="NC_005042.1"/>
</dbReference>
<dbReference type="SMR" id="Q7VBT3"/>
<dbReference type="STRING" id="167539.Pro_1009"/>
<dbReference type="EnsemblBacteria" id="AAQ00054">
    <property type="protein sequence ID" value="AAQ00054"/>
    <property type="gene ID" value="Pro_1009"/>
</dbReference>
<dbReference type="KEGG" id="pma:Pro_1009"/>
<dbReference type="PATRIC" id="fig|167539.5.peg.1060"/>
<dbReference type="eggNOG" id="COG0337">
    <property type="taxonomic scope" value="Bacteria"/>
</dbReference>
<dbReference type="HOGENOM" id="CLU_001201_0_2_3"/>
<dbReference type="OrthoDB" id="9806583at2"/>
<dbReference type="UniPathway" id="UPA00053">
    <property type="reaction ID" value="UER00085"/>
</dbReference>
<dbReference type="Proteomes" id="UP000001420">
    <property type="component" value="Chromosome"/>
</dbReference>
<dbReference type="GO" id="GO:0005737">
    <property type="term" value="C:cytoplasm"/>
    <property type="evidence" value="ECO:0007669"/>
    <property type="project" value="UniProtKB-SubCell"/>
</dbReference>
<dbReference type="GO" id="GO:0003856">
    <property type="term" value="F:3-dehydroquinate synthase activity"/>
    <property type="evidence" value="ECO:0007669"/>
    <property type="project" value="UniProtKB-UniRule"/>
</dbReference>
<dbReference type="GO" id="GO:0046872">
    <property type="term" value="F:metal ion binding"/>
    <property type="evidence" value="ECO:0007669"/>
    <property type="project" value="UniProtKB-KW"/>
</dbReference>
<dbReference type="GO" id="GO:0000166">
    <property type="term" value="F:nucleotide binding"/>
    <property type="evidence" value="ECO:0007669"/>
    <property type="project" value="UniProtKB-KW"/>
</dbReference>
<dbReference type="GO" id="GO:0008652">
    <property type="term" value="P:amino acid biosynthetic process"/>
    <property type="evidence" value="ECO:0007669"/>
    <property type="project" value="UniProtKB-KW"/>
</dbReference>
<dbReference type="GO" id="GO:0009073">
    <property type="term" value="P:aromatic amino acid family biosynthetic process"/>
    <property type="evidence" value="ECO:0007669"/>
    <property type="project" value="UniProtKB-KW"/>
</dbReference>
<dbReference type="GO" id="GO:0009423">
    <property type="term" value="P:chorismate biosynthetic process"/>
    <property type="evidence" value="ECO:0007669"/>
    <property type="project" value="UniProtKB-UniRule"/>
</dbReference>
<dbReference type="CDD" id="cd08195">
    <property type="entry name" value="DHQS"/>
    <property type="match status" value="1"/>
</dbReference>
<dbReference type="FunFam" id="3.40.50.1970:FF:000001">
    <property type="entry name" value="3-dehydroquinate synthase"/>
    <property type="match status" value="1"/>
</dbReference>
<dbReference type="Gene3D" id="3.40.50.1970">
    <property type="match status" value="1"/>
</dbReference>
<dbReference type="Gene3D" id="1.20.1090.10">
    <property type="entry name" value="Dehydroquinate synthase-like - alpha domain"/>
    <property type="match status" value="1"/>
</dbReference>
<dbReference type="HAMAP" id="MF_00110">
    <property type="entry name" value="DHQ_synthase"/>
    <property type="match status" value="1"/>
</dbReference>
<dbReference type="InterPro" id="IPR050071">
    <property type="entry name" value="Dehydroquinate_synthase"/>
</dbReference>
<dbReference type="InterPro" id="IPR016037">
    <property type="entry name" value="DHQ_synth_AroB"/>
</dbReference>
<dbReference type="InterPro" id="IPR030963">
    <property type="entry name" value="DHQ_synth_fam"/>
</dbReference>
<dbReference type="InterPro" id="IPR030960">
    <property type="entry name" value="DHQS/DOIS_N"/>
</dbReference>
<dbReference type="InterPro" id="IPR056179">
    <property type="entry name" value="DHQS_C"/>
</dbReference>
<dbReference type="NCBIfam" id="TIGR01357">
    <property type="entry name" value="aroB"/>
    <property type="match status" value="1"/>
</dbReference>
<dbReference type="PANTHER" id="PTHR43622">
    <property type="entry name" value="3-DEHYDROQUINATE SYNTHASE"/>
    <property type="match status" value="1"/>
</dbReference>
<dbReference type="PANTHER" id="PTHR43622:SF7">
    <property type="entry name" value="3-DEHYDROQUINATE SYNTHASE, CHLOROPLASTIC"/>
    <property type="match status" value="1"/>
</dbReference>
<dbReference type="Pfam" id="PF01761">
    <property type="entry name" value="DHQ_synthase"/>
    <property type="match status" value="1"/>
</dbReference>
<dbReference type="Pfam" id="PF24621">
    <property type="entry name" value="DHQS_C"/>
    <property type="match status" value="1"/>
</dbReference>
<dbReference type="PIRSF" id="PIRSF001455">
    <property type="entry name" value="DHQ_synth"/>
    <property type="match status" value="1"/>
</dbReference>
<dbReference type="SUPFAM" id="SSF56796">
    <property type="entry name" value="Dehydroquinate synthase-like"/>
    <property type="match status" value="1"/>
</dbReference>
<reference key="1">
    <citation type="journal article" date="2003" name="Proc. Natl. Acad. Sci. U.S.A.">
        <title>Genome sequence of the cyanobacterium Prochlorococcus marinus SS120, a nearly minimal oxyphototrophic genome.</title>
        <authorList>
            <person name="Dufresne A."/>
            <person name="Salanoubat M."/>
            <person name="Partensky F."/>
            <person name="Artiguenave F."/>
            <person name="Axmann I.M."/>
            <person name="Barbe V."/>
            <person name="Duprat S."/>
            <person name="Galperin M.Y."/>
            <person name="Koonin E.V."/>
            <person name="Le Gall F."/>
            <person name="Makarova K.S."/>
            <person name="Ostrowski M."/>
            <person name="Oztas S."/>
            <person name="Robert C."/>
            <person name="Rogozin I.B."/>
            <person name="Scanlan D.J."/>
            <person name="Tandeau de Marsac N."/>
            <person name="Weissenbach J."/>
            <person name="Wincker P."/>
            <person name="Wolf Y.I."/>
            <person name="Hess W.R."/>
        </authorList>
    </citation>
    <scope>NUCLEOTIDE SEQUENCE [LARGE SCALE GENOMIC DNA]</scope>
    <source>
        <strain>SARG / CCMP1375 / SS120</strain>
    </source>
</reference>
<name>AROB_PROMA</name>
<proteinExistence type="inferred from homology"/>
<accession>Q7VBT3</accession>
<comment type="function">
    <text evidence="1">Catalyzes the conversion of 3-deoxy-D-arabino-heptulosonate 7-phosphate (DAHP) to dehydroquinate (DHQ).</text>
</comment>
<comment type="catalytic activity">
    <reaction evidence="1">
        <text>7-phospho-2-dehydro-3-deoxy-D-arabino-heptonate = 3-dehydroquinate + phosphate</text>
        <dbReference type="Rhea" id="RHEA:21968"/>
        <dbReference type="ChEBI" id="CHEBI:32364"/>
        <dbReference type="ChEBI" id="CHEBI:43474"/>
        <dbReference type="ChEBI" id="CHEBI:58394"/>
        <dbReference type="EC" id="4.2.3.4"/>
    </reaction>
</comment>
<comment type="cofactor">
    <cofactor evidence="1">
        <name>NAD(+)</name>
        <dbReference type="ChEBI" id="CHEBI:57540"/>
    </cofactor>
</comment>
<comment type="cofactor">
    <cofactor evidence="1">
        <name>Co(2+)</name>
        <dbReference type="ChEBI" id="CHEBI:48828"/>
    </cofactor>
    <cofactor evidence="1">
        <name>Zn(2+)</name>
        <dbReference type="ChEBI" id="CHEBI:29105"/>
    </cofactor>
    <text evidence="1">Binds 1 divalent metal cation per subunit. Can use either Co(2+) or Zn(2+).</text>
</comment>
<comment type="pathway">
    <text evidence="1">Metabolic intermediate biosynthesis; chorismate biosynthesis; chorismate from D-erythrose 4-phosphate and phosphoenolpyruvate: step 2/7.</text>
</comment>
<comment type="subcellular location">
    <subcellularLocation>
        <location evidence="1">Cytoplasm</location>
    </subcellularLocation>
</comment>
<comment type="similarity">
    <text evidence="1">Belongs to the sugar phosphate cyclases superfamily. Dehydroquinate synthase family.</text>
</comment>
<keyword id="KW-0028">Amino-acid biosynthesis</keyword>
<keyword id="KW-0057">Aromatic amino acid biosynthesis</keyword>
<keyword id="KW-0170">Cobalt</keyword>
<keyword id="KW-0963">Cytoplasm</keyword>
<keyword id="KW-0456">Lyase</keyword>
<keyword id="KW-0479">Metal-binding</keyword>
<keyword id="KW-0520">NAD</keyword>
<keyword id="KW-0547">Nucleotide-binding</keyword>
<keyword id="KW-1185">Reference proteome</keyword>
<keyword id="KW-0862">Zinc</keyword>
<evidence type="ECO:0000255" key="1">
    <source>
        <dbReference type="HAMAP-Rule" id="MF_00110"/>
    </source>
</evidence>
<protein>
    <recommendedName>
        <fullName evidence="1">3-dehydroquinate synthase</fullName>
        <shortName evidence="1">DHQS</shortName>
        <ecNumber evidence="1">4.2.3.4</ecNumber>
    </recommendedName>
</protein>
<sequence length="367" mass="40728">MNQDNCRIKVNLKNNPYEVVVGSEILYTIGEELLRINIRTGEKILIVTNPDVSKPYSRRFITSLKEAGYDANLLILEAGENKKNYESIALIHNAAYEHQLDRGSLIIALGGGVIGDMAGFAAATWLRGIDFVQVPTTLLAMVDASVGGKTGVNHPKGKNLIGAFHQPKLVLIDINTLKTLPQREFRSGMAEIIKYGVIKDLELFNKLENEEDLSNIYSIKECVLLELIKISVSIKARIVEKDEKESGLRAILNYGHTFGHVIETLCGYGHWLHGEAVSMGMVLIGQLALRKNLWNVDDALRQEKLLTKAGLPISWPKINNEDVLRTLKGDKKVDKGNIRLIVPLGIGMVEILNDVSENEIKSLLESI</sequence>
<gene>
    <name evidence="1" type="primary">aroB</name>
    <name type="ordered locus">Pro_1009</name>
</gene>
<feature type="chain" id="PRO_0000140765" description="3-dehydroquinate synthase">
    <location>
        <begin position="1"/>
        <end position="367"/>
    </location>
</feature>
<feature type="binding site" evidence="1">
    <location>
        <begin position="112"/>
        <end position="116"/>
    </location>
    <ligand>
        <name>NAD(+)</name>
        <dbReference type="ChEBI" id="CHEBI:57540"/>
    </ligand>
</feature>
<feature type="binding site" evidence="1">
    <location>
        <begin position="136"/>
        <end position="137"/>
    </location>
    <ligand>
        <name>NAD(+)</name>
        <dbReference type="ChEBI" id="CHEBI:57540"/>
    </ligand>
</feature>
<feature type="binding site" evidence="1">
    <location>
        <position position="149"/>
    </location>
    <ligand>
        <name>NAD(+)</name>
        <dbReference type="ChEBI" id="CHEBI:57540"/>
    </ligand>
</feature>
<feature type="binding site" evidence="1">
    <location>
        <position position="158"/>
    </location>
    <ligand>
        <name>NAD(+)</name>
        <dbReference type="ChEBI" id="CHEBI:57540"/>
    </ligand>
</feature>
<feature type="binding site" evidence="1">
    <location>
        <begin position="176"/>
        <end position="179"/>
    </location>
    <ligand>
        <name>NAD(+)</name>
        <dbReference type="ChEBI" id="CHEBI:57540"/>
    </ligand>
</feature>
<feature type="binding site" evidence="1">
    <location>
        <position position="191"/>
    </location>
    <ligand>
        <name>Zn(2+)</name>
        <dbReference type="ChEBI" id="CHEBI:29105"/>
    </ligand>
</feature>
<feature type="binding site" evidence="1">
    <location>
        <position position="256"/>
    </location>
    <ligand>
        <name>Zn(2+)</name>
        <dbReference type="ChEBI" id="CHEBI:29105"/>
    </ligand>
</feature>
<feature type="binding site" evidence="1">
    <location>
        <position position="273"/>
    </location>
    <ligand>
        <name>Zn(2+)</name>
        <dbReference type="ChEBI" id="CHEBI:29105"/>
    </ligand>
</feature>
<organism>
    <name type="scientific">Prochlorococcus marinus (strain SARG / CCMP1375 / SS120)</name>
    <dbReference type="NCBI Taxonomy" id="167539"/>
    <lineage>
        <taxon>Bacteria</taxon>
        <taxon>Bacillati</taxon>
        <taxon>Cyanobacteriota</taxon>
        <taxon>Cyanophyceae</taxon>
        <taxon>Synechococcales</taxon>
        <taxon>Prochlorococcaceae</taxon>
        <taxon>Prochlorococcus</taxon>
    </lineage>
</organism>